<organism>
    <name type="scientific">Polaromonas sp. (strain JS666 / ATCC BAA-500)</name>
    <dbReference type="NCBI Taxonomy" id="296591"/>
    <lineage>
        <taxon>Bacteria</taxon>
        <taxon>Pseudomonadati</taxon>
        <taxon>Pseudomonadota</taxon>
        <taxon>Betaproteobacteria</taxon>
        <taxon>Burkholderiales</taxon>
        <taxon>Comamonadaceae</taxon>
        <taxon>Polaromonas</taxon>
    </lineage>
</organism>
<comment type="subunit">
    <text evidence="1">Forms oligomers.</text>
</comment>
<comment type="subcellular location">
    <subcellularLocation>
        <location evidence="1">Cytoplasm</location>
        <location evidence="1">Nucleoid</location>
    </subcellularLocation>
</comment>
<comment type="similarity">
    <text evidence="1">Belongs to the MraZ family.</text>
</comment>
<evidence type="ECO:0000255" key="1">
    <source>
        <dbReference type="HAMAP-Rule" id="MF_01008"/>
    </source>
</evidence>
<evidence type="ECO:0000255" key="2">
    <source>
        <dbReference type="PROSITE-ProRule" id="PRU01076"/>
    </source>
</evidence>
<accession>Q12EM4</accession>
<gene>
    <name evidence="1" type="primary">mraZ</name>
    <name type="ordered locus">Bpro_1066</name>
</gene>
<dbReference type="EMBL" id="CP000316">
    <property type="protein sequence ID" value="ABE43018.1"/>
    <property type="molecule type" value="Genomic_DNA"/>
</dbReference>
<dbReference type="RefSeq" id="WP_011482020.1">
    <property type="nucleotide sequence ID" value="NC_007948.1"/>
</dbReference>
<dbReference type="SMR" id="Q12EM4"/>
<dbReference type="STRING" id="296591.Bpro_1066"/>
<dbReference type="KEGG" id="pol:Bpro_1066"/>
<dbReference type="eggNOG" id="COG2001">
    <property type="taxonomic scope" value="Bacteria"/>
</dbReference>
<dbReference type="HOGENOM" id="CLU_107907_2_1_4"/>
<dbReference type="OrthoDB" id="9807753at2"/>
<dbReference type="Proteomes" id="UP000001983">
    <property type="component" value="Chromosome"/>
</dbReference>
<dbReference type="GO" id="GO:0005737">
    <property type="term" value="C:cytoplasm"/>
    <property type="evidence" value="ECO:0007669"/>
    <property type="project" value="UniProtKB-UniRule"/>
</dbReference>
<dbReference type="GO" id="GO:0009295">
    <property type="term" value="C:nucleoid"/>
    <property type="evidence" value="ECO:0007669"/>
    <property type="project" value="UniProtKB-SubCell"/>
</dbReference>
<dbReference type="GO" id="GO:0003700">
    <property type="term" value="F:DNA-binding transcription factor activity"/>
    <property type="evidence" value="ECO:0007669"/>
    <property type="project" value="UniProtKB-UniRule"/>
</dbReference>
<dbReference type="GO" id="GO:0000976">
    <property type="term" value="F:transcription cis-regulatory region binding"/>
    <property type="evidence" value="ECO:0007669"/>
    <property type="project" value="TreeGrafter"/>
</dbReference>
<dbReference type="GO" id="GO:2000143">
    <property type="term" value="P:negative regulation of DNA-templated transcription initiation"/>
    <property type="evidence" value="ECO:0007669"/>
    <property type="project" value="TreeGrafter"/>
</dbReference>
<dbReference type="CDD" id="cd16321">
    <property type="entry name" value="MraZ_C"/>
    <property type="match status" value="1"/>
</dbReference>
<dbReference type="CDD" id="cd16320">
    <property type="entry name" value="MraZ_N"/>
    <property type="match status" value="1"/>
</dbReference>
<dbReference type="Gene3D" id="3.40.1550.20">
    <property type="entry name" value="Transcriptional regulator MraZ domain"/>
    <property type="match status" value="1"/>
</dbReference>
<dbReference type="HAMAP" id="MF_01008">
    <property type="entry name" value="MraZ"/>
    <property type="match status" value="1"/>
</dbReference>
<dbReference type="InterPro" id="IPR003444">
    <property type="entry name" value="MraZ"/>
</dbReference>
<dbReference type="InterPro" id="IPR035644">
    <property type="entry name" value="MraZ_C"/>
</dbReference>
<dbReference type="InterPro" id="IPR020603">
    <property type="entry name" value="MraZ_dom"/>
</dbReference>
<dbReference type="InterPro" id="IPR035642">
    <property type="entry name" value="MraZ_N"/>
</dbReference>
<dbReference type="InterPro" id="IPR038619">
    <property type="entry name" value="MraZ_sf"/>
</dbReference>
<dbReference type="InterPro" id="IPR007159">
    <property type="entry name" value="SpoVT-AbrB_dom"/>
</dbReference>
<dbReference type="InterPro" id="IPR037914">
    <property type="entry name" value="SpoVT-AbrB_sf"/>
</dbReference>
<dbReference type="NCBIfam" id="TIGR00242">
    <property type="entry name" value="division/cell wall cluster transcriptional repressor MraZ"/>
    <property type="match status" value="1"/>
</dbReference>
<dbReference type="PANTHER" id="PTHR34701">
    <property type="entry name" value="TRANSCRIPTIONAL REGULATOR MRAZ"/>
    <property type="match status" value="1"/>
</dbReference>
<dbReference type="PANTHER" id="PTHR34701:SF1">
    <property type="entry name" value="TRANSCRIPTIONAL REGULATOR MRAZ"/>
    <property type="match status" value="1"/>
</dbReference>
<dbReference type="Pfam" id="PF02381">
    <property type="entry name" value="MraZ"/>
    <property type="match status" value="2"/>
</dbReference>
<dbReference type="SUPFAM" id="SSF89447">
    <property type="entry name" value="AbrB/MazE/MraZ-like"/>
    <property type="match status" value="1"/>
</dbReference>
<dbReference type="PROSITE" id="PS51740">
    <property type="entry name" value="SPOVT_ABRB"/>
    <property type="match status" value="2"/>
</dbReference>
<sequence>MFQGASSLALDTKGRLSVPTRHRDVLSATASSQLTITKHPHGCLMIFPRNEWEKFRERIASLPMQAQWWKRIFLGNAMDVDMDATGRVLVSPELRQAAGISKDAVLLGMGSYFELWDAATYAAQEAEQMKGEMPDVFRDFSF</sequence>
<reference key="1">
    <citation type="journal article" date="2008" name="Appl. Environ. Microbiol.">
        <title>The genome of Polaromonas sp. strain JS666: insights into the evolution of a hydrocarbon- and xenobiotic-degrading bacterium, and features of relevance to biotechnology.</title>
        <authorList>
            <person name="Mattes T.E."/>
            <person name="Alexander A.K."/>
            <person name="Richardson P.M."/>
            <person name="Munk A.C."/>
            <person name="Han C.S."/>
            <person name="Stothard P."/>
            <person name="Coleman N.V."/>
        </authorList>
    </citation>
    <scope>NUCLEOTIDE SEQUENCE [LARGE SCALE GENOMIC DNA]</scope>
    <source>
        <strain>JS666 / ATCC BAA-500</strain>
    </source>
</reference>
<feature type="chain" id="PRO_1000062910" description="Transcriptional regulator MraZ">
    <location>
        <begin position="1"/>
        <end position="142"/>
    </location>
</feature>
<feature type="domain" description="SpoVT-AbrB 1" evidence="2">
    <location>
        <begin position="5"/>
        <end position="51"/>
    </location>
</feature>
<feature type="domain" description="SpoVT-AbrB 2" evidence="2">
    <location>
        <begin position="77"/>
        <end position="120"/>
    </location>
</feature>
<protein>
    <recommendedName>
        <fullName>Transcriptional regulator MraZ</fullName>
    </recommendedName>
</protein>
<proteinExistence type="inferred from homology"/>
<keyword id="KW-0963">Cytoplasm</keyword>
<keyword id="KW-0238">DNA-binding</keyword>
<keyword id="KW-1185">Reference proteome</keyword>
<keyword id="KW-0677">Repeat</keyword>
<keyword id="KW-0804">Transcription</keyword>
<keyword id="KW-0805">Transcription regulation</keyword>
<name>MRAZ_POLSJ</name>